<feature type="chain" id="PRO_1000000353" description="Adenine phosphoribosyltransferase">
    <location>
        <begin position="1"/>
        <end position="172"/>
    </location>
</feature>
<comment type="function">
    <text evidence="1">Catalyzes a salvage reaction resulting in the formation of AMP, that is energically less costly than de novo synthesis.</text>
</comment>
<comment type="catalytic activity">
    <reaction evidence="1">
        <text>AMP + diphosphate = 5-phospho-alpha-D-ribose 1-diphosphate + adenine</text>
        <dbReference type="Rhea" id="RHEA:16609"/>
        <dbReference type="ChEBI" id="CHEBI:16708"/>
        <dbReference type="ChEBI" id="CHEBI:33019"/>
        <dbReference type="ChEBI" id="CHEBI:58017"/>
        <dbReference type="ChEBI" id="CHEBI:456215"/>
        <dbReference type="EC" id="2.4.2.7"/>
    </reaction>
</comment>
<comment type="pathway">
    <text evidence="1">Purine metabolism; AMP biosynthesis via salvage pathway; AMP from adenine: step 1/1.</text>
</comment>
<comment type="subunit">
    <text evidence="1">Homodimer.</text>
</comment>
<comment type="subcellular location">
    <subcellularLocation>
        <location evidence="1">Cytoplasm</location>
    </subcellularLocation>
</comment>
<comment type="similarity">
    <text evidence="1">Belongs to the purine/pyrimidine phosphoribosyltransferase family.</text>
</comment>
<gene>
    <name evidence="1" type="primary">apt</name>
    <name type="ordered locus">MGAS9429_Spy0786</name>
</gene>
<accession>Q1JM38</accession>
<protein>
    <recommendedName>
        <fullName evidence="1">Adenine phosphoribosyltransferase</fullName>
        <shortName evidence="1">APRT</shortName>
        <ecNumber evidence="1">2.4.2.7</ecNumber>
    </recommendedName>
</protein>
<dbReference type="EC" id="2.4.2.7" evidence="1"/>
<dbReference type="EMBL" id="CP000259">
    <property type="protein sequence ID" value="ABF31974.1"/>
    <property type="molecule type" value="Genomic_DNA"/>
</dbReference>
<dbReference type="RefSeq" id="WP_002990109.1">
    <property type="nucleotide sequence ID" value="NC_008021.1"/>
</dbReference>
<dbReference type="SMR" id="Q1JM38"/>
<dbReference type="KEGG" id="spk:MGAS9429_Spy0786"/>
<dbReference type="HOGENOM" id="CLU_063339_3_0_9"/>
<dbReference type="UniPathway" id="UPA00588">
    <property type="reaction ID" value="UER00646"/>
</dbReference>
<dbReference type="Proteomes" id="UP000002433">
    <property type="component" value="Chromosome"/>
</dbReference>
<dbReference type="GO" id="GO:0005737">
    <property type="term" value="C:cytoplasm"/>
    <property type="evidence" value="ECO:0007669"/>
    <property type="project" value="UniProtKB-SubCell"/>
</dbReference>
<dbReference type="GO" id="GO:0002055">
    <property type="term" value="F:adenine binding"/>
    <property type="evidence" value="ECO:0007669"/>
    <property type="project" value="TreeGrafter"/>
</dbReference>
<dbReference type="GO" id="GO:0003999">
    <property type="term" value="F:adenine phosphoribosyltransferase activity"/>
    <property type="evidence" value="ECO:0007669"/>
    <property type="project" value="UniProtKB-UniRule"/>
</dbReference>
<dbReference type="GO" id="GO:0016208">
    <property type="term" value="F:AMP binding"/>
    <property type="evidence" value="ECO:0007669"/>
    <property type="project" value="TreeGrafter"/>
</dbReference>
<dbReference type="GO" id="GO:0006168">
    <property type="term" value="P:adenine salvage"/>
    <property type="evidence" value="ECO:0007669"/>
    <property type="project" value="InterPro"/>
</dbReference>
<dbReference type="GO" id="GO:0044209">
    <property type="term" value="P:AMP salvage"/>
    <property type="evidence" value="ECO:0007669"/>
    <property type="project" value="UniProtKB-UniRule"/>
</dbReference>
<dbReference type="GO" id="GO:0006166">
    <property type="term" value="P:purine ribonucleoside salvage"/>
    <property type="evidence" value="ECO:0007669"/>
    <property type="project" value="UniProtKB-KW"/>
</dbReference>
<dbReference type="CDD" id="cd06223">
    <property type="entry name" value="PRTases_typeI"/>
    <property type="match status" value="1"/>
</dbReference>
<dbReference type="FunFam" id="3.40.50.2020:FF:000004">
    <property type="entry name" value="Adenine phosphoribosyltransferase"/>
    <property type="match status" value="1"/>
</dbReference>
<dbReference type="Gene3D" id="3.40.50.2020">
    <property type="match status" value="1"/>
</dbReference>
<dbReference type="HAMAP" id="MF_00004">
    <property type="entry name" value="Aden_phosphoribosyltr"/>
    <property type="match status" value="1"/>
</dbReference>
<dbReference type="InterPro" id="IPR005764">
    <property type="entry name" value="Ade_phspho_trans"/>
</dbReference>
<dbReference type="InterPro" id="IPR000836">
    <property type="entry name" value="PRibTrfase_dom"/>
</dbReference>
<dbReference type="InterPro" id="IPR029057">
    <property type="entry name" value="PRTase-like"/>
</dbReference>
<dbReference type="InterPro" id="IPR050054">
    <property type="entry name" value="UPRTase/APRTase"/>
</dbReference>
<dbReference type="NCBIfam" id="TIGR01090">
    <property type="entry name" value="apt"/>
    <property type="match status" value="1"/>
</dbReference>
<dbReference type="NCBIfam" id="NF002633">
    <property type="entry name" value="PRK02304.1-2"/>
    <property type="match status" value="1"/>
</dbReference>
<dbReference type="NCBIfam" id="NF002634">
    <property type="entry name" value="PRK02304.1-3"/>
    <property type="match status" value="1"/>
</dbReference>
<dbReference type="NCBIfam" id="NF002636">
    <property type="entry name" value="PRK02304.1-5"/>
    <property type="match status" value="1"/>
</dbReference>
<dbReference type="PANTHER" id="PTHR32315">
    <property type="entry name" value="ADENINE PHOSPHORIBOSYLTRANSFERASE"/>
    <property type="match status" value="1"/>
</dbReference>
<dbReference type="PANTHER" id="PTHR32315:SF3">
    <property type="entry name" value="ADENINE PHOSPHORIBOSYLTRANSFERASE"/>
    <property type="match status" value="1"/>
</dbReference>
<dbReference type="Pfam" id="PF00156">
    <property type="entry name" value="Pribosyltran"/>
    <property type="match status" value="1"/>
</dbReference>
<dbReference type="SUPFAM" id="SSF53271">
    <property type="entry name" value="PRTase-like"/>
    <property type="match status" value="1"/>
</dbReference>
<dbReference type="PROSITE" id="PS00103">
    <property type="entry name" value="PUR_PYR_PR_TRANSFER"/>
    <property type="match status" value="1"/>
</dbReference>
<reference key="1">
    <citation type="journal article" date="2006" name="Proc. Natl. Acad. Sci. U.S.A.">
        <title>Molecular genetic anatomy of inter- and intraserotype variation in the human bacterial pathogen group A Streptococcus.</title>
        <authorList>
            <person name="Beres S.B."/>
            <person name="Richter E.W."/>
            <person name="Nagiec M.J."/>
            <person name="Sumby P."/>
            <person name="Porcella S.F."/>
            <person name="DeLeo F.R."/>
            <person name="Musser J.M."/>
        </authorList>
    </citation>
    <scope>NUCLEOTIDE SEQUENCE [LARGE SCALE GENOMIC DNA]</scope>
    <source>
        <strain>MGAS9429</strain>
    </source>
</reference>
<evidence type="ECO:0000255" key="1">
    <source>
        <dbReference type="HAMAP-Rule" id="MF_00004"/>
    </source>
</evidence>
<sequence length="172" mass="18687">MDLTNYIASIKDYPKAGITFRDISPLMADGKAYSYAIREIAQYACDKDIDMVVGPEARGFIIGCPVAVELGIGFAPVRKPGKLPRDVVSADYEKEYGLDTLTMHADAIKPGQRVLIVDDLLATGGTVKATIEMIEKLGGIVAGCAFLIELEGLNGRHAIRNYDYKVLMQFPG</sequence>
<proteinExistence type="inferred from homology"/>
<organism>
    <name type="scientific">Streptococcus pyogenes serotype M12 (strain MGAS9429)</name>
    <dbReference type="NCBI Taxonomy" id="370551"/>
    <lineage>
        <taxon>Bacteria</taxon>
        <taxon>Bacillati</taxon>
        <taxon>Bacillota</taxon>
        <taxon>Bacilli</taxon>
        <taxon>Lactobacillales</taxon>
        <taxon>Streptococcaceae</taxon>
        <taxon>Streptococcus</taxon>
    </lineage>
</organism>
<keyword id="KW-0963">Cytoplasm</keyword>
<keyword id="KW-0328">Glycosyltransferase</keyword>
<keyword id="KW-0660">Purine salvage</keyword>
<keyword id="KW-0808">Transferase</keyword>
<name>APT_STRPC</name>